<organism>
    <name type="scientific">Cuscuta reflexa</name>
    <name type="common">Southern Asian dodder</name>
    <dbReference type="NCBI Taxonomy" id="4129"/>
    <lineage>
        <taxon>Eukaryota</taxon>
        <taxon>Viridiplantae</taxon>
        <taxon>Streptophyta</taxon>
        <taxon>Embryophyta</taxon>
        <taxon>Tracheophyta</taxon>
        <taxon>Spermatophyta</taxon>
        <taxon>Magnoliopsida</taxon>
        <taxon>eudicotyledons</taxon>
        <taxon>Gunneridae</taxon>
        <taxon>Pentapetalae</taxon>
        <taxon>asterids</taxon>
        <taxon>lamiids</taxon>
        <taxon>Solanales</taxon>
        <taxon>Convolvulaceae</taxon>
        <taxon>Cuscuteae</taxon>
        <taxon>Cuscuta</taxon>
        <taxon>Cuscuta subgen. Monogynella</taxon>
    </lineage>
</organism>
<protein>
    <recommendedName>
        <fullName>Uncharacterized 6.8 kDa protein in trnL 3'region</fullName>
    </recommendedName>
    <alternativeName>
        <fullName>ORF 55</fullName>
    </alternativeName>
</protein>
<sequence>MEYMKRVEYLYRSVMSYRTQLDIQLLRFELSGECLIDISKRWTIKPLSRFTQRGE</sequence>
<proteinExistence type="predicted"/>
<geneLocation type="plastid"/>
<keyword id="KW-0934">Plastid</keyword>
<feature type="chain" id="PRO_0000217519" description="Uncharacterized 6.8 kDa protein in trnL 3'region">
    <location>
        <begin position="1"/>
        <end position="55"/>
    </location>
</feature>
<dbReference type="EMBL" id="X67512">
    <property type="protein sequence ID" value="CAA47850.1"/>
    <property type="molecule type" value="Genomic_DNA"/>
</dbReference>
<dbReference type="EMBL" id="AM711640">
    <property type="protein sequence ID" value="CAM98434.1"/>
    <property type="molecule type" value="Genomic_DNA"/>
</dbReference>
<dbReference type="EMBL" id="AM711640">
    <property type="protein sequence ID" value="CAM98442.1"/>
    <property type="molecule type" value="Genomic_DNA"/>
</dbReference>
<dbReference type="PIR" id="S33915">
    <property type="entry name" value="S33915"/>
</dbReference>
<dbReference type="RefSeq" id="YP_001430147.1">
    <property type="nucleotide sequence ID" value="NC_009766.1"/>
</dbReference>
<dbReference type="RefSeq" id="YP_001430155.1">
    <property type="nucleotide sequence ID" value="NC_009766.1"/>
</dbReference>
<dbReference type="GeneID" id="5536631"/>
<dbReference type="GeneID" id="5536700"/>
<dbReference type="GO" id="GO:0009536">
    <property type="term" value="C:plastid"/>
    <property type="evidence" value="ECO:0007669"/>
    <property type="project" value="UniProtKB-SubCell"/>
</dbReference>
<name>YCX1_CUSRE</name>
<comment type="subcellular location">
    <subcellularLocation>
        <location>Plastid</location>
    </subcellularLocation>
</comment>
<comment type="caution">
    <text evidence="1">Young tissue from this organism is photosynthetic and contains some thylakoids, although the photosynthetic activity does not exceed the light compensation point.</text>
</comment>
<reference key="1">
    <citation type="journal article" date="1993" name="Curr. Genet.">
        <title>A large deletion in the plastid DNA of the holoparasitic flowering plant Cuscuta reflexa concerning two ribosomal proteins (rpl2, rpl23), one transfer RNA (trnI) and an ORF 2280 homologue.</title>
        <authorList>
            <person name="Boemmer D."/>
            <person name="Haberhausen G."/>
            <person name="Zetsche K."/>
        </authorList>
    </citation>
    <scope>NUCLEOTIDE SEQUENCE [GENOMIC DNA]</scope>
</reference>
<reference key="2">
    <citation type="journal article" date="2007" name="BMC Plant Biol.">
        <title>Complete DNA sequences of the plastid genomes of two parasitic flowering plant species, Cuscuta reflexa and Cuscuta gronovii.</title>
        <authorList>
            <person name="Funk H.T."/>
            <person name="Berg S."/>
            <person name="Krupinska K."/>
            <person name="Maier U.-G."/>
            <person name="Krause K."/>
        </authorList>
    </citation>
    <scope>NUCLEOTIDE SEQUENCE [LARGE SCALE GENOMIC DNA]</scope>
</reference>
<evidence type="ECO:0000305" key="1"/>
<accession>P32035</accession>
<accession>A7M9A6</accession>